<reference key="1">
    <citation type="journal article" date="2004" name="Nat. Biotechnol.">
        <title>The genome sequence of the capnophilic rumen bacterium Mannheimia succiniciproducens.</title>
        <authorList>
            <person name="Hong S.H."/>
            <person name="Kim J.S."/>
            <person name="Lee S.Y."/>
            <person name="In Y.H."/>
            <person name="Choi S.S."/>
            <person name="Rih J.-K."/>
            <person name="Kim C.H."/>
            <person name="Jeong H."/>
            <person name="Hur C.G."/>
            <person name="Kim J.J."/>
        </authorList>
    </citation>
    <scope>NUCLEOTIDE SEQUENCE [LARGE SCALE GENOMIC DNA]</scope>
    <source>
        <strain>KCTC 0769BP / MBEL55E</strain>
    </source>
</reference>
<accession>Q65S20</accession>
<name>EPMA_MANSM</name>
<keyword id="KW-0067">ATP-binding</keyword>
<keyword id="KW-0436">Ligase</keyword>
<keyword id="KW-0547">Nucleotide-binding</keyword>
<evidence type="ECO:0000255" key="1">
    <source>
        <dbReference type="HAMAP-Rule" id="MF_00174"/>
    </source>
</evidence>
<dbReference type="EC" id="6.3.2.-" evidence="1"/>
<dbReference type="EMBL" id="AE016827">
    <property type="protein sequence ID" value="AAU38240.1"/>
    <property type="molecule type" value="Genomic_DNA"/>
</dbReference>
<dbReference type="RefSeq" id="WP_011200801.1">
    <property type="nucleotide sequence ID" value="NC_006300.1"/>
</dbReference>
<dbReference type="SMR" id="Q65S20"/>
<dbReference type="STRING" id="221988.MS1633"/>
<dbReference type="KEGG" id="msu:MS1633"/>
<dbReference type="eggNOG" id="COG2269">
    <property type="taxonomic scope" value="Bacteria"/>
</dbReference>
<dbReference type="HOGENOM" id="CLU_008255_1_1_6"/>
<dbReference type="OrthoDB" id="9802326at2"/>
<dbReference type="Proteomes" id="UP000000607">
    <property type="component" value="Chromosome"/>
</dbReference>
<dbReference type="GO" id="GO:0005829">
    <property type="term" value="C:cytosol"/>
    <property type="evidence" value="ECO:0007669"/>
    <property type="project" value="TreeGrafter"/>
</dbReference>
<dbReference type="GO" id="GO:0016880">
    <property type="term" value="F:acid-ammonia (or amide) ligase activity"/>
    <property type="evidence" value="ECO:0007669"/>
    <property type="project" value="UniProtKB-UniRule"/>
</dbReference>
<dbReference type="GO" id="GO:0005524">
    <property type="term" value="F:ATP binding"/>
    <property type="evidence" value="ECO:0007669"/>
    <property type="project" value="UniProtKB-UniRule"/>
</dbReference>
<dbReference type="GO" id="GO:0004824">
    <property type="term" value="F:lysine-tRNA ligase activity"/>
    <property type="evidence" value="ECO:0007669"/>
    <property type="project" value="InterPro"/>
</dbReference>
<dbReference type="GO" id="GO:0000049">
    <property type="term" value="F:tRNA binding"/>
    <property type="evidence" value="ECO:0007669"/>
    <property type="project" value="TreeGrafter"/>
</dbReference>
<dbReference type="GO" id="GO:0006430">
    <property type="term" value="P:lysyl-tRNA aminoacylation"/>
    <property type="evidence" value="ECO:0007669"/>
    <property type="project" value="InterPro"/>
</dbReference>
<dbReference type="FunFam" id="3.30.930.10:FF:000017">
    <property type="entry name" value="Elongation factor P--(R)-beta-lysine ligase"/>
    <property type="match status" value="1"/>
</dbReference>
<dbReference type="Gene3D" id="3.30.930.10">
    <property type="entry name" value="Bira Bifunctional Protein, Domain 2"/>
    <property type="match status" value="1"/>
</dbReference>
<dbReference type="HAMAP" id="MF_00174">
    <property type="entry name" value="EF_P_modif_A"/>
    <property type="match status" value="1"/>
</dbReference>
<dbReference type="InterPro" id="IPR004364">
    <property type="entry name" value="Aa-tRNA-synt_II"/>
</dbReference>
<dbReference type="InterPro" id="IPR006195">
    <property type="entry name" value="aa-tRNA-synth_II"/>
</dbReference>
<dbReference type="InterPro" id="IPR045864">
    <property type="entry name" value="aa-tRNA-synth_II/BPL/LPL"/>
</dbReference>
<dbReference type="InterPro" id="IPR004525">
    <property type="entry name" value="EpmA"/>
</dbReference>
<dbReference type="InterPro" id="IPR018149">
    <property type="entry name" value="Lys-tRNA-synth_II_C"/>
</dbReference>
<dbReference type="NCBIfam" id="TIGR00462">
    <property type="entry name" value="genX"/>
    <property type="match status" value="1"/>
</dbReference>
<dbReference type="NCBIfam" id="NF006828">
    <property type="entry name" value="PRK09350.1"/>
    <property type="match status" value="1"/>
</dbReference>
<dbReference type="PANTHER" id="PTHR42918:SF6">
    <property type="entry name" value="ELONGATION FACTOR P--(R)-BETA-LYSINE LIGASE"/>
    <property type="match status" value="1"/>
</dbReference>
<dbReference type="PANTHER" id="PTHR42918">
    <property type="entry name" value="LYSYL-TRNA SYNTHETASE"/>
    <property type="match status" value="1"/>
</dbReference>
<dbReference type="Pfam" id="PF00152">
    <property type="entry name" value="tRNA-synt_2"/>
    <property type="match status" value="1"/>
</dbReference>
<dbReference type="PRINTS" id="PR00982">
    <property type="entry name" value="TRNASYNTHLYS"/>
</dbReference>
<dbReference type="SUPFAM" id="SSF55681">
    <property type="entry name" value="Class II aaRS and biotin synthetases"/>
    <property type="match status" value="1"/>
</dbReference>
<dbReference type="PROSITE" id="PS50862">
    <property type="entry name" value="AA_TRNA_LIGASE_II"/>
    <property type="match status" value="1"/>
</dbReference>
<gene>
    <name evidence="1" type="primary">epmA</name>
    <name type="synonym">yjeA</name>
    <name type="ordered locus">MS1633</name>
</gene>
<proteinExistence type="inferred from homology"/>
<feature type="chain" id="PRO_1000023627" description="Elongation factor P--(R)-beta-lysine ligase">
    <location>
        <begin position="1"/>
        <end position="323"/>
    </location>
</feature>
<feature type="binding site" evidence="1">
    <location>
        <begin position="76"/>
        <end position="78"/>
    </location>
    <ligand>
        <name>substrate</name>
    </ligand>
</feature>
<feature type="binding site" evidence="1">
    <location>
        <begin position="100"/>
        <end position="102"/>
    </location>
    <ligand>
        <name>ATP</name>
        <dbReference type="ChEBI" id="CHEBI:30616"/>
    </ligand>
</feature>
<feature type="binding site" evidence="1">
    <location>
        <position position="109"/>
    </location>
    <ligand>
        <name>ATP</name>
        <dbReference type="ChEBI" id="CHEBI:30616"/>
    </ligand>
</feature>
<feature type="binding site" evidence="1">
    <location>
        <position position="118"/>
    </location>
    <ligand>
        <name>substrate</name>
    </ligand>
</feature>
<feature type="binding site" evidence="1">
    <location>
        <begin position="242"/>
        <end position="243"/>
    </location>
    <ligand>
        <name>ATP</name>
        <dbReference type="ChEBI" id="CHEBI:30616"/>
    </ligand>
</feature>
<feature type="binding site" evidence="1">
    <location>
        <position position="249"/>
    </location>
    <ligand>
        <name>substrate</name>
    </ligand>
</feature>
<feature type="binding site" evidence="1">
    <location>
        <position position="298"/>
    </location>
    <ligand>
        <name>ATP</name>
        <dbReference type="ChEBI" id="CHEBI:30616"/>
    </ligand>
</feature>
<comment type="function">
    <text evidence="1">With EpmB is involved in the beta-lysylation step of the post-translational modification of translation elongation factor P (EF-P). Catalyzes the ATP-dependent activation of (R)-beta-lysine produced by EpmB, forming a lysyl-adenylate, from which the beta-lysyl moiety is then transferred to the epsilon-amino group of a conserved specific lysine residue in EF-P.</text>
</comment>
<comment type="catalytic activity">
    <reaction evidence="1">
        <text>D-beta-lysine + L-lysyl-[protein] + ATP = N(6)-((3R)-3,6-diaminohexanoyl)-L-lysyl-[protein] + AMP + diphosphate + H(+)</text>
        <dbReference type="Rhea" id="RHEA:83435"/>
        <dbReference type="Rhea" id="RHEA-COMP:9752"/>
        <dbReference type="Rhea" id="RHEA-COMP:20131"/>
        <dbReference type="ChEBI" id="CHEBI:15378"/>
        <dbReference type="ChEBI" id="CHEBI:29969"/>
        <dbReference type="ChEBI" id="CHEBI:30616"/>
        <dbReference type="ChEBI" id="CHEBI:33019"/>
        <dbReference type="ChEBI" id="CHEBI:84138"/>
        <dbReference type="ChEBI" id="CHEBI:156053"/>
        <dbReference type="ChEBI" id="CHEBI:456215"/>
    </reaction>
    <physiologicalReaction direction="left-to-right" evidence="1">
        <dbReference type="Rhea" id="RHEA:83436"/>
    </physiologicalReaction>
</comment>
<comment type="subunit">
    <text evidence="1">Homodimer.</text>
</comment>
<comment type="similarity">
    <text evidence="1">Belongs to the class-II aminoacyl-tRNA synthetase family. EpmA subfamily.</text>
</comment>
<protein>
    <recommendedName>
        <fullName evidence="1">Elongation factor P--(R)-beta-lysine ligase</fullName>
        <shortName evidence="1">EF-P--(R)-beta-lysine ligase</shortName>
        <ecNumber evidence="1">6.3.2.-</ecNumber>
    </recommendedName>
    <alternativeName>
        <fullName evidence="1">EF-P post-translational modification enzyme A</fullName>
    </alternativeName>
    <alternativeName>
        <fullName evidence="1">EF-P-lysine lysyltransferase</fullName>
    </alternativeName>
</protein>
<organism>
    <name type="scientific">Mannheimia succiniciproducens (strain KCTC 0769BP / MBEL55E)</name>
    <dbReference type="NCBI Taxonomy" id="221988"/>
    <lineage>
        <taxon>Bacteria</taxon>
        <taxon>Pseudomonadati</taxon>
        <taxon>Pseudomonadota</taxon>
        <taxon>Gammaproteobacteria</taxon>
        <taxon>Pasteurellales</taxon>
        <taxon>Pasteurellaceae</taxon>
        <taxon>Basfia</taxon>
    </lineage>
</organism>
<sequence length="323" mass="37075">MFEQEAWQPSAPIKTLFTRAKIIREIRKFFTERGLLEVETPVLSEFGVTDVHLSTFNTEFIAPIGENSKTLWLMTSPEYHMKRLLAAGSGAIFQICRVFRNEEAGSRHNPEFTMLEWYRPHFDMYRLINEVDDLLQQILDCEPAESFSYQFVFQQYVGLDPLSAPRAELVAKAREHHFMCDENEERDTLLEFLFSTVVEPQIGQTRPAVIYHFPASQAALAQISSEDHRVAERFEFYFKGLELANGFNELTDANEQLIRFERDNRQREKMGLPQRAIDKRLLAALEAGMPNCAGVALGVDRLLMAALNANRIEEVMAFGVNNA</sequence>